<evidence type="ECO:0000255" key="1">
    <source>
        <dbReference type="HAMAP-Rule" id="MF_01576"/>
    </source>
</evidence>
<evidence type="ECO:0007829" key="2">
    <source>
        <dbReference type="PDB" id="8WFC"/>
    </source>
</evidence>
<comment type="function">
    <text evidence="1">Catalyzes the oxidation of 5,10-methylenetetrahydrofolate to 5,10-methenyltetrahydrofolate and then the hydrolysis of 5,10-methenyltetrahydrofolate to 10-formyltetrahydrofolate.</text>
</comment>
<comment type="catalytic activity">
    <reaction evidence="1">
        <text>(6R)-5,10-methylene-5,6,7,8-tetrahydrofolate + NADP(+) = (6R)-5,10-methenyltetrahydrofolate + NADPH</text>
        <dbReference type="Rhea" id="RHEA:22812"/>
        <dbReference type="ChEBI" id="CHEBI:15636"/>
        <dbReference type="ChEBI" id="CHEBI:57455"/>
        <dbReference type="ChEBI" id="CHEBI:57783"/>
        <dbReference type="ChEBI" id="CHEBI:58349"/>
        <dbReference type="EC" id="1.5.1.5"/>
    </reaction>
</comment>
<comment type="catalytic activity">
    <reaction evidence="1">
        <text>(6R)-5,10-methenyltetrahydrofolate + H2O = (6R)-10-formyltetrahydrofolate + H(+)</text>
        <dbReference type="Rhea" id="RHEA:23700"/>
        <dbReference type="ChEBI" id="CHEBI:15377"/>
        <dbReference type="ChEBI" id="CHEBI:15378"/>
        <dbReference type="ChEBI" id="CHEBI:57455"/>
        <dbReference type="ChEBI" id="CHEBI:195366"/>
        <dbReference type="EC" id="3.5.4.9"/>
    </reaction>
</comment>
<comment type="pathway">
    <text evidence="1">One-carbon metabolism; tetrahydrofolate interconversion.</text>
</comment>
<comment type="subunit">
    <text evidence="1">Homodimer.</text>
</comment>
<comment type="similarity">
    <text evidence="1">Belongs to the tetrahydrofolate dehydrogenase/cyclohydrolase family.</text>
</comment>
<organism>
    <name type="scientific">Porphyromonas gingivalis (strain ATCC BAA-308 / W83)</name>
    <dbReference type="NCBI Taxonomy" id="242619"/>
    <lineage>
        <taxon>Bacteria</taxon>
        <taxon>Pseudomonadati</taxon>
        <taxon>Bacteroidota</taxon>
        <taxon>Bacteroidia</taxon>
        <taxon>Bacteroidales</taxon>
        <taxon>Porphyromonadaceae</taxon>
        <taxon>Porphyromonas</taxon>
    </lineage>
</organism>
<dbReference type="EC" id="1.5.1.5" evidence="1"/>
<dbReference type="EC" id="3.5.4.9" evidence="1"/>
<dbReference type="EMBL" id="AE015924">
    <property type="protein sequence ID" value="AAQ66226.1"/>
    <property type="molecule type" value="Genomic_DNA"/>
</dbReference>
<dbReference type="RefSeq" id="WP_004584417.1">
    <property type="nucleotide sequence ID" value="NC_002950.2"/>
</dbReference>
<dbReference type="PDB" id="8WFC">
    <property type="method" value="X-ray"/>
    <property type="resolution" value="2.05 A"/>
    <property type="chains" value="A=1-296"/>
</dbReference>
<dbReference type="PDBsum" id="8WFC"/>
<dbReference type="SMR" id="Q7MVE9"/>
<dbReference type="STRING" id="242619.PG_1116"/>
<dbReference type="EnsemblBacteria" id="AAQ66226">
    <property type="protein sequence ID" value="AAQ66226"/>
    <property type="gene ID" value="PG_1116"/>
</dbReference>
<dbReference type="KEGG" id="pgi:PG_1116"/>
<dbReference type="eggNOG" id="COG0190">
    <property type="taxonomic scope" value="Bacteria"/>
</dbReference>
<dbReference type="HOGENOM" id="CLU_034045_2_1_10"/>
<dbReference type="UniPathway" id="UPA00193"/>
<dbReference type="Proteomes" id="UP000000588">
    <property type="component" value="Chromosome"/>
</dbReference>
<dbReference type="GO" id="GO:0005829">
    <property type="term" value="C:cytosol"/>
    <property type="evidence" value="ECO:0007669"/>
    <property type="project" value="TreeGrafter"/>
</dbReference>
<dbReference type="GO" id="GO:0004477">
    <property type="term" value="F:methenyltetrahydrofolate cyclohydrolase activity"/>
    <property type="evidence" value="ECO:0007669"/>
    <property type="project" value="UniProtKB-UniRule"/>
</dbReference>
<dbReference type="GO" id="GO:0004488">
    <property type="term" value="F:methylenetetrahydrofolate dehydrogenase (NADP+) activity"/>
    <property type="evidence" value="ECO:0007669"/>
    <property type="project" value="UniProtKB-UniRule"/>
</dbReference>
<dbReference type="GO" id="GO:0000105">
    <property type="term" value="P:L-histidine biosynthetic process"/>
    <property type="evidence" value="ECO:0007669"/>
    <property type="project" value="UniProtKB-KW"/>
</dbReference>
<dbReference type="GO" id="GO:0009086">
    <property type="term" value="P:methionine biosynthetic process"/>
    <property type="evidence" value="ECO:0007669"/>
    <property type="project" value="UniProtKB-KW"/>
</dbReference>
<dbReference type="GO" id="GO:0006164">
    <property type="term" value="P:purine nucleotide biosynthetic process"/>
    <property type="evidence" value="ECO:0007669"/>
    <property type="project" value="UniProtKB-KW"/>
</dbReference>
<dbReference type="GO" id="GO:0035999">
    <property type="term" value="P:tetrahydrofolate interconversion"/>
    <property type="evidence" value="ECO:0007669"/>
    <property type="project" value="UniProtKB-UniRule"/>
</dbReference>
<dbReference type="CDD" id="cd01080">
    <property type="entry name" value="NAD_bind_m-THF_DH_Cyclohyd"/>
    <property type="match status" value="1"/>
</dbReference>
<dbReference type="FunFam" id="3.40.50.720:FF:000189">
    <property type="entry name" value="Bifunctional protein FolD"/>
    <property type="match status" value="1"/>
</dbReference>
<dbReference type="FunFam" id="3.40.50.10860:FF:000005">
    <property type="entry name" value="C-1-tetrahydrofolate synthase, cytoplasmic, putative"/>
    <property type="match status" value="1"/>
</dbReference>
<dbReference type="Gene3D" id="3.40.50.10860">
    <property type="entry name" value="Leucine Dehydrogenase, chain A, domain 1"/>
    <property type="match status" value="1"/>
</dbReference>
<dbReference type="Gene3D" id="3.40.50.720">
    <property type="entry name" value="NAD(P)-binding Rossmann-like Domain"/>
    <property type="match status" value="1"/>
</dbReference>
<dbReference type="HAMAP" id="MF_01576">
    <property type="entry name" value="THF_DHG_CYH"/>
    <property type="match status" value="1"/>
</dbReference>
<dbReference type="InterPro" id="IPR046346">
    <property type="entry name" value="Aminoacid_DH-like_N_sf"/>
</dbReference>
<dbReference type="InterPro" id="IPR036291">
    <property type="entry name" value="NAD(P)-bd_dom_sf"/>
</dbReference>
<dbReference type="InterPro" id="IPR000672">
    <property type="entry name" value="THF_DH/CycHdrlase"/>
</dbReference>
<dbReference type="InterPro" id="IPR020630">
    <property type="entry name" value="THF_DH/CycHdrlase_cat_dom"/>
</dbReference>
<dbReference type="InterPro" id="IPR020867">
    <property type="entry name" value="THF_DH/CycHdrlase_CS"/>
</dbReference>
<dbReference type="InterPro" id="IPR020631">
    <property type="entry name" value="THF_DH/CycHdrlase_NAD-bd_dom"/>
</dbReference>
<dbReference type="NCBIfam" id="NF010782">
    <property type="entry name" value="PRK14185.1"/>
    <property type="match status" value="1"/>
</dbReference>
<dbReference type="PANTHER" id="PTHR48099:SF5">
    <property type="entry name" value="C-1-TETRAHYDROFOLATE SYNTHASE, CYTOPLASMIC"/>
    <property type="match status" value="1"/>
</dbReference>
<dbReference type="PANTHER" id="PTHR48099">
    <property type="entry name" value="C-1-TETRAHYDROFOLATE SYNTHASE, CYTOPLASMIC-RELATED"/>
    <property type="match status" value="1"/>
</dbReference>
<dbReference type="Pfam" id="PF00763">
    <property type="entry name" value="THF_DHG_CYH"/>
    <property type="match status" value="1"/>
</dbReference>
<dbReference type="Pfam" id="PF02882">
    <property type="entry name" value="THF_DHG_CYH_C"/>
    <property type="match status" value="1"/>
</dbReference>
<dbReference type="PRINTS" id="PR00085">
    <property type="entry name" value="THFDHDRGNASE"/>
</dbReference>
<dbReference type="SUPFAM" id="SSF53223">
    <property type="entry name" value="Aminoacid dehydrogenase-like, N-terminal domain"/>
    <property type="match status" value="1"/>
</dbReference>
<dbReference type="SUPFAM" id="SSF51735">
    <property type="entry name" value="NAD(P)-binding Rossmann-fold domains"/>
    <property type="match status" value="1"/>
</dbReference>
<dbReference type="PROSITE" id="PS00766">
    <property type="entry name" value="THF_DHG_CYH_1"/>
    <property type="match status" value="1"/>
</dbReference>
<dbReference type="PROSITE" id="PS00767">
    <property type="entry name" value="THF_DHG_CYH_2"/>
    <property type="match status" value="1"/>
</dbReference>
<feature type="chain" id="PRO_0000268433" description="Bifunctional protein FolD">
    <location>
        <begin position="1"/>
        <end position="296"/>
    </location>
</feature>
<feature type="binding site" evidence="1">
    <location>
        <begin position="168"/>
        <end position="170"/>
    </location>
    <ligand>
        <name>NADP(+)</name>
        <dbReference type="ChEBI" id="CHEBI:58349"/>
    </ligand>
</feature>
<feature type="binding site" evidence="1">
    <location>
        <position position="197"/>
    </location>
    <ligand>
        <name>NADP(+)</name>
        <dbReference type="ChEBI" id="CHEBI:58349"/>
    </ligand>
</feature>
<feature type="binding site" evidence="1">
    <location>
        <position position="238"/>
    </location>
    <ligand>
        <name>NADP(+)</name>
        <dbReference type="ChEBI" id="CHEBI:58349"/>
    </ligand>
</feature>
<feature type="helix" evidence="2">
    <location>
        <begin position="10"/>
        <end position="30"/>
    </location>
</feature>
<feature type="strand" evidence="2">
    <location>
        <begin position="37"/>
        <end position="44"/>
    </location>
</feature>
<feature type="helix" evidence="2">
    <location>
        <begin position="47"/>
        <end position="63"/>
    </location>
</feature>
<feature type="strand" evidence="2">
    <location>
        <begin position="66"/>
        <end position="72"/>
    </location>
</feature>
<feature type="helix" evidence="2">
    <location>
        <begin position="78"/>
        <end position="90"/>
    </location>
</feature>
<feature type="strand" evidence="2">
    <location>
        <begin position="95"/>
        <end position="99"/>
    </location>
</feature>
<feature type="helix" evidence="2">
    <location>
        <begin position="109"/>
        <end position="114"/>
    </location>
</feature>
<feature type="helix" evidence="2">
    <location>
        <begin position="118"/>
        <end position="120"/>
    </location>
</feature>
<feature type="helix" evidence="2">
    <location>
        <begin position="127"/>
        <end position="135"/>
    </location>
</feature>
<feature type="helix" evidence="2">
    <location>
        <begin position="143"/>
        <end position="154"/>
    </location>
</feature>
<feature type="strand" evidence="2">
    <location>
        <begin position="163"/>
        <end position="167"/>
    </location>
</feature>
<feature type="turn" evidence="2">
    <location>
        <begin position="171"/>
        <end position="173"/>
    </location>
</feature>
<feature type="helix" evidence="2">
    <location>
        <begin position="174"/>
        <end position="181"/>
    </location>
</feature>
<feature type="strand" evidence="2">
    <location>
        <begin position="183"/>
        <end position="187"/>
    </location>
</feature>
<feature type="strand" evidence="2">
    <location>
        <begin position="191"/>
        <end position="195"/>
    </location>
</feature>
<feature type="helix" evidence="2">
    <location>
        <begin position="202"/>
        <end position="206"/>
    </location>
</feature>
<feature type="strand" evidence="2">
    <location>
        <begin position="210"/>
        <end position="214"/>
    </location>
</feature>
<feature type="helix" evidence="2">
    <location>
        <begin position="224"/>
        <end position="226"/>
    </location>
</feature>
<feature type="strand" evidence="2">
    <location>
        <begin position="231"/>
        <end position="235"/>
    </location>
</feature>
<feature type="helix" evidence="2">
    <location>
        <begin position="258"/>
        <end position="261"/>
    </location>
</feature>
<feature type="helix" evidence="2">
    <location>
        <begin position="262"/>
        <end position="264"/>
    </location>
</feature>
<feature type="strand" evidence="2">
    <location>
        <begin position="265"/>
        <end position="268"/>
    </location>
</feature>
<feature type="strand" evidence="2">
    <location>
        <begin position="271"/>
        <end position="274"/>
    </location>
</feature>
<feature type="helix" evidence="2">
    <location>
        <begin position="275"/>
        <end position="291"/>
    </location>
</feature>
<name>FOLD_PORGI</name>
<accession>Q7MVE9</accession>
<sequence>METTYKLLDGKKISGEIKQEIAAVVNELLEKGGRRPHLAGVLVGHDGGSETYMASKVKACEEVGFTSSLIRYEDDVTEEELLACVHRLNQDPTVDGFIVQLPLPKHIDEQKIIEAVDPRKDVDGFHPINVGRLSIGLPGFVSATPKGIVELLRRYNIPTRGKHCVVLGRSNIVGKPVSQLLLQKGEPGDCTITICHSRTPNIKEVCLTADIIIAALGQPEFLTADMVKPGAVVVDVGTTLVPDSTRKSGFRLTGDVKFDEVAPKCSYITPVPGGVGPMTIVSLMSNTLLASKGLYR</sequence>
<proteinExistence type="evidence at protein level"/>
<gene>
    <name evidence="1" type="primary">folD</name>
    <name type="ordered locus">PG_1116</name>
</gene>
<reference key="1">
    <citation type="journal article" date="2003" name="J. Bacteriol.">
        <title>Complete genome sequence of the oral pathogenic bacterium Porphyromonas gingivalis strain W83.</title>
        <authorList>
            <person name="Nelson K.E."/>
            <person name="Fleischmann R.D."/>
            <person name="DeBoy R.T."/>
            <person name="Paulsen I.T."/>
            <person name="Fouts D.E."/>
            <person name="Eisen J.A."/>
            <person name="Daugherty S.C."/>
            <person name="Dodson R.J."/>
            <person name="Durkin A.S."/>
            <person name="Gwinn M.L."/>
            <person name="Haft D.H."/>
            <person name="Kolonay J.F."/>
            <person name="Nelson W.C."/>
            <person name="Mason T.M."/>
            <person name="Tallon L."/>
            <person name="Gray J."/>
            <person name="Granger D."/>
            <person name="Tettelin H."/>
            <person name="Dong H."/>
            <person name="Galvin J.L."/>
            <person name="Duncan M.J."/>
            <person name="Dewhirst F.E."/>
            <person name="Fraser C.M."/>
        </authorList>
    </citation>
    <scope>NUCLEOTIDE SEQUENCE [LARGE SCALE GENOMIC DNA]</scope>
    <source>
        <strain>ATCC BAA-308 / W83</strain>
    </source>
</reference>
<keyword id="KW-0002">3D-structure</keyword>
<keyword id="KW-0028">Amino-acid biosynthesis</keyword>
<keyword id="KW-0368">Histidine biosynthesis</keyword>
<keyword id="KW-0378">Hydrolase</keyword>
<keyword id="KW-0486">Methionine biosynthesis</keyword>
<keyword id="KW-0511">Multifunctional enzyme</keyword>
<keyword id="KW-0521">NADP</keyword>
<keyword id="KW-0554">One-carbon metabolism</keyword>
<keyword id="KW-0560">Oxidoreductase</keyword>
<keyword id="KW-0658">Purine biosynthesis</keyword>
<keyword id="KW-1185">Reference proteome</keyword>
<protein>
    <recommendedName>
        <fullName evidence="1">Bifunctional protein FolD</fullName>
    </recommendedName>
    <domain>
        <recommendedName>
            <fullName evidence="1">Methylenetetrahydrofolate dehydrogenase</fullName>
            <ecNumber evidence="1">1.5.1.5</ecNumber>
        </recommendedName>
    </domain>
    <domain>
        <recommendedName>
            <fullName evidence="1">Methenyltetrahydrofolate cyclohydrolase</fullName>
            <ecNumber evidence="1">3.5.4.9</ecNumber>
        </recommendedName>
    </domain>
</protein>